<evidence type="ECO:0000255" key="1">
    <source>
        <dbReference type="HAMAP-Rule" id="MF_01171"/>
    </source>
</evidence>
<reference key="1">
    <citation type="journal article" date="2009" name="J. Bacteriol.">
        <title>Complete genome sequence and comparative genome analysis of enteropathogenic Escherichia coli O127:H6 strain E2348/69.</title>
        <authorList>
            <person name="Iguchi A."/>
            <person name="Thomson N.R."/>
            <person name="Ogura Y."/>
            <person name="Saunders D."/>
            <person name="Ooka T."/>
            <person name="Henderson I.R."/>
            <person name="Harris D."/>
            <person name="Asadulghani M."/>
            <person name="Kurokawa K."/>
            <person name="Dean P."/>
            <person name="Kenny B."/>
            <person name="Quail M.A."/>
            <person name="Thurston S."/>
            <person name="Dougan G."/>
            <person name="Hayashi T."/>
            <person name="Parkhill J."/>
            <person name="Frankel G."/>
        </authorList>
    </citation>
    <scope>NUCLEOTIDE SEQUENCE [LARGE SCALE GENOMIC DNA]</scope>
    <source>
        <strain>E2348/69 / EPEC</strain>
    </source>
</reference>
<organism>
    <name type="scientific">Escherichia coli O127:H6 (strain E2348/69 / EPEC)</name>
    <dbReference type="NCBI Taxonomy" id="574521"/>
    <lineage>
        <taxon>Bacteria</taxon>
        <taxon>Pseudomonadati</taxon>
        <taxon>Pseudomonadota</taxon>
        <taxon>Gammaproteobacteria</taxon>
        <taxon>Enterobacterales</taxon>
        <taxon>Enterobacteriaceae</taxon>
        <taxon>Escherichia</taxon>
    </lineage>
</organism>
<name>ASTA_ECO27</name>
<proteinExistence type="inferred from homology"/>
<feature type="chain" id="PRO_1000164365" description="Arginine N-succinyltransferase">
    <location>
        <begin position="1"/>
        <end position="344"/>
    </location>
</feature>
<feature type="active site" description="Proton donor" evidence="1">
    <location>
        <position position="229"/>
    </location>
</feature>
<feature type="binding site" evidence="1">
    <location>
        <position position="125"/>
    </location>
    <ligand>
        <name>succinyl-CoA</name>
        <dbReference type="ChEBI" id="CHEBI:57292"/>
    </ligand>
</feature>
<dbReference type="EC" id="2.3.1.109" evidence="1"/>
<dbReference type="EMBL" id="FM180568">
    <property type="protein sequence ID" value="CAS09423.1"/>
    <property type="molecule type" value="Genomic_DNA"/>
</dbReference>
<dbReference type="RefSeq" id="WP_000989436.1">
    <property type="nucleotide sequence ID" value="NC_011601.1"/>
</dbReference>
<dbReference type="SMR" id="B7USC8"/>
<dbReference type="KEGG" id="ecg:E2348C_1875"/>
<dbReference type="HOGENOM" id="CLU_057655_0_0_6"/>
<dbReference type="UniPathway" id="UPA00185">
    <property type="reaction ID" value="UER00279"/>
</dbReference>
<dbReference type="Proteomes" id="UP000008205">
    <property type="component" value="Chromosome"/>
</dbReference>
<dbReference type="GO" id="GO:0008791">
    <property type="term" value="F:arginine N-succinyltransferase activity"/>
    <property type="evidence" value="ECO:0007669"/>
    <property type="project" value="UniProtKB-UniRule"/>
</dbReference>
<dbReference type="GO" id="GO:0019544">
    <property type="term" value="P:arginine catabolic process to glutamate"/>
    <property type="evidence" value="ECO:0007669"/>
    <property type="project" value="UniProtKB-UniRule"/>
</dbReference>
<dbReference type="GO" id="GO:0019545">
    <property type="term" value="P:arginine catabolic process to succinate"/>
    <property type="evidence" value="ECO:0007669"/>
    <property type="project" value="UniProtKB-UniRule"/>
</dbReference>
<dbReference type="Gene3D" id="2.40.40.20">
    <property type="match status" value="1"/>
</dbReference>
<dbReference type="Gene3D" id="3.40.630.30">
    <property type="match status" value="1"/>
</dbReference>
<dbReference type="HAMAP" id="MF_01171">
    <property type="entry name" value="AstA"/>
    <property type="match status" value="1"/>
</dbReference>
<dbReference type="InterPro" id="IPR016181">
    <property type="entry name" value="Acyl_CoA_acyltransferase"/>
</dbReference>
<dbReference type="InterPro" id="IPR007041">
    <property type="entry name" value="Arg_succinylTrfase_AstA/AruG"/>
</dbReference>
<dbReference type="InterPro" id="IPR017650">
    <property type="entry name" value="Arginine_N-succinylTrfase"/>
</dbReference>
<dbReference type="NCBIfam" id="TIGR03243">
    <property type="entry name" value="arg_catab_AOST"/>
    <property type="match status" value="1"/>
</dbReference>
<dbReference type="NCBIfam" id="TIGR03244">
    <property type="entry name" value="arg_catab_AstA"/>
    <property type="match status" value="1"/>
</dbReference>
<dbReference type="NCBIfam" id="NF007770">
    <property type="entry name" value="PRK10456.1"/>
    <property type="match status" value="1"/>
</dbReference>
<dbReference type="PANTHER" id="PTHR30420:SF1">
    <property type="entry name" value="ARGININE N-SUCCINYLTRANSFERASE"/>
    <property type="match status" value="1"/>
</dbReference>
<dbReference type="PANTHER" id="PTHR30420">
    <property type="entry name" value="N-SUCCINYLARGININE DIHYDROLASE"/>
    <property type="match status" value="1"/>
</dbReference>
<dbReference type="Pfam" id="PF04958">
    <property type="entry name" value="AstA"/>
    <property type="match status" value="1"/>
</dbReference>
<dbReference type="SUPFAM" id="SSF55729">
    <property type="entry name" value="Acyl-CoA N-acyltransferases (Nat)"/>
    <property type="match status" value="1"/>
</dbReference>
<protein>
    <recommendedName>
        <fullName evidence="1">Arginine N-succinyltransferase</fullName>
        <shortName evidence="1">AST</shortName>
        <ecNumber evidence="1">2.3.1.109</ecNumber>
    </recommendedName>
    <alternativeName>
        <fullName evidence="1">AOST</fullName>
    </alternativeName>
</protein>
<keyword id="KW-0012">Acyltransferase</keyword>
<keyword id="KW-0056">Arginine metabolism</keyword>
<keyword id="KW-1185">Reference proteome</keyword>
<keyword id="KW-0808">Transferase</keyword>
<sequence>MMVIRPVERSDVSALMQLASKTGGGLTSLPANEATLSVRIERAIKTWQGELPKSEQGYVFVLEDSETGTVAGICAIEVAVGLNDPWYNYRVGTLVHASKELNVYNALPTLFLSNDHTGSSELCTLFLDPEWRKEGNGYLLSKSRFMFMAAFRDKFNDKVVAEMRGVIDEHGYSPFWQSLGKRFFSMDFSRADFLCGTGQKAFIAELMPKHPIYTHFLSQEAQDVIGQVHPQTAPARAVLEKEGFRYRNYIDIFDGGPTLECDIDRVRAIRKSRLVEVAEGQPAQGDFPACLVANENYHHFRVVLVRTDPATERLILTAAQLDALKCHAGDRVRLVRLCAEEKTA</sequence>
<gene>
    <name evidence="1" type="primary">astA</name>
    <name type="ordered locus">E2348C_1875</name>
</gene>
<accession>B7USC8</accession>
<comment type="function">
    <text evidence="1">Catalyzes the transfer of succinyl-CoA to arginine to produce N(2)-succinylarginine.</text>
</comment>
<comment type="catalytic activity">
    <reaction evidence="1">
        <text>succinyl-CoA + L-arginine = N(2)-succinyl-L-arginine + CoA + H(+)</text>
        <dbReference type="Rhea" id="RHEA:15185"/>
        <dbReference type="ChEBI" id="CHEBI:15378"/>
        <dbReference type="ChEBI" id="CHEBI:32682"/>
        <dbReference type="ChEBI" id="CHEBI:57287"/>
        <dbReference type="ChEBI" id="CHEBI:57292"/>
        <dbReference type="ChEBI" id="CHEBI:58241"/>
        <dbReference type="EC" id="2.3.1.109"/>
    </reaction>
</comment>
<comment type="pathway">
    <text evidence="1">Amino-acid degradation; L-arginine degradation via AST pathway; L-glutamate and succinate from L-arginine: step 1/5.</text>
</comment>
<comment type="similarity">
    <text evidence="1">Belongs to the arginine N-succinyltransferase family.</text>
</comment>